<feature type="chain" id="PRO_0000437635" description="Reducing polyketide synthase PKS2">
    <location>
        <begin position="1"/>
        <end position="2144"/>
    </location>
</feature>
<feature type="domain" description="Ketosynthase family 3 (KS3)" evidence="3">
    <location>
        <begin position="10"/>
        <end position="436"/>
    </location>
</feature>
<feature type="domain" description="PKS/mFAS DH" evidence="4">
    <location>
        <begin position="924"/>
        <end position="1237"/>
    </location>
</feature>
<feature type="domain" description="Carrier" evidence="2">
    <location>
        <begin position="2059"/>
        <end position="2136"/>
    </location>
</feature>
<feature type="region of interest" description="Malonyl-CoA:ACP transacylase (MAT)" evidence="1">
    <location>
        <begin position="538"/>
        <end position="855"/>
    </location>
</feature>
<feature type="region of interest" description="Dehydratase (DH) domain" evidence="1">
    <location>
        <begin position="924"/>
        <end position="1214"/>
    </location>
</feature>
<feature type="region of interest" description="N-terminal hotdog fold" evidence="4">
    <location>
        <begin position="924"/>
        <end position="1058"/>
    </location>
</feature>
<feature type="region of interest" description="C-terminal hotdog fold" evidence="4">
    <location>
        <begin position="1076"/>
        <end position="1237"/>
    </location>
</feature>
<feature type="region of interest" description="Enoyl reductase (ER) domain" evidence="1">
    <location>
        <begin position="1461"/>
        <end position="1747"/>
    </location>
</feature>
<feature type="region of interest" description="Ketoreductase (KR) domain" evidence="1">
    <location>
        <begin position="1771"/>
        <end position="1948"/>
    </location>
</feature>
<feature type="active site" description="For beta-ketoacyl synthase activity" evidence="3">
    <location>
        <position position="183"/>
    </location>
</feature>
<feature type="active site" description="For beta-ketoacyl synthase activity" evidence="3">
    <location>
        <position position="319"/>
    </location>
</feature>
<feature type="active site" description="For beta-ketoacyl synthase activity" evidence="3">
    <location>
        <position position="360"/>
    </location>
</feature>
<feature type="modified residue" description="O-(pantetheine 4'-phosphoryl)serine" evidence="2">
    <location>
        <position position="2096"/>
    </location>
</feature>
<feature type="sequence conflict" description="In Ref. 1; ABB76806." evidence="10" ref="1">
    <original>R</original>
    <variation>W</variation>
    <location>
        <position position="1359"/>
    </location>
</feature>
<accession>N4WHA7</accession>
<accession>Q2XW08</accession>
<proteinExistence type="inferred from homology"/>
<reference key="1">
    <citation type="journal article" date="2006" name="Mol. Plant Microbe Interact.">
        <title>Two polyketide synthase-encoding genes are required for biosynthesis of the polyketide virulence factor, T-toxin, by Cochliobolus heterostrophus.</title>
        <authorList>
            <person name="Baker S.E."/>
            <person name="Kroken S."/>
            <person name="Inderbitzin P."/>
            <person name="Asvarak T."/>
            <person name="Li B.Y."/>
            <person name="Shi L."/>
            <person name="Yoder O.C."/>
            <person name="Turgeon B.G."/>
        </authorList>
    </citation>
    <scope>NUCLEOTIDE SEQUENCE [GENOMIC DNA]</scope>
    <scope>FUNCTION</scope>
    <scope>DISRUPTION PHENOTYPE</scope>
</reference>
<reference key="2">
    <citation type="journal article" date="2012" name="PLoS Pathog.">
        <title>Diverse lifestyles and strategies of plant pathogenesis encoded in the genomes of eighteen Dothideomycetes fungi.</title>
        <authorList>
            <person name="Ohm R.A."/>
            <person name="Feau N."/>
            <person name="Henrissat B."/>
            <person name="Schoch C.L."/>
            <person name="Horwitz B.A."/>
            <person name="Barry K.W."/>
            <person name="Condon B.J."/>
            <person name="Copeland A.C."/>
            <person name="Dhillon B."/>
            <person name="Glaser F."/>
            <person name="Hesse C.N."/>
            <person name="Kosti I."/>
            <person name="LaButti K."/>
            <person name="Lindquist E.A."/>
            <person name="Lucas S."/>
            <person name="Salamov A.A."/>
            <person name="Bradshaw R.E."/>
            <person name="Ciuffetti L."/>
            <person name="Hamelin R.C."/>
            <person name="Kema G.H.J."/>
            <person name="Lawrence C."/>
            <person name="Scott J.A."/>
            <person name="Spatafora J.W."/>
            <person name="Turgeon B.G."/>
            <person name="de Wit P.J.G.M."/>
            <person name="Zhong S."/>
            <person name="Goodwin S.B."/>
            <person name="Grigoriev I.V."/>
        </authorList>
    </citation>
    <scope>NUCLEOTIDE SEQUENCE [LARGE SCALE GENOMIC DNA]</scope>
    <source>
        <strain>C4 / ATCC 48331 / race T</strain>
    </source>
</reference>
<reference key="3">
    <citation type="journal article" date="2013" name="PLoS Genet.">
        <title>Comparative genome structure, secondary metabolite, and effector coding capacity across Cochliobolus pathogens.</title>
        <authorList>
            <person name="Condon B.J."/>
            <person name="Leng Y."/>
            <person name="Wu D."/>
            <person name="Bushley K.E."/>
            <person name="Ohm R.A."/>
            <person name="Otillar R."/>
            <person name="Martin J."/>
            <person name="Schackwitz W."/>
            <person name="Grimwood J."/>
            <person name="MohdZainudin N."/>
            <person name="Xue C."/>
            <person name="Wang R."/>
            <person name="Manning V.A."/>
            <person name="Dhillon B."/>
            <person name="Tu Z.J."/>
            <person name="Steffenson B.J."/>
            <person name="Salamov A."/>
            <person name="Sun H."/>
            <person name="Lowry S."/>
            <person name="LaButti K."/>
            <person name="Han J."/>
            <person name="Copeland A."/>
            <person name="Lindquist E."/>
            <person name="Barry K."/>
            <person name="Schmutz J."/>
            <person name="Baker S.E."/>
            <person name="Ciuffetti L.M."/>
            <person name="Grigoriev I.V."/>
            <person name="Zhong S."/>
            <person name="Turgeon B.G."/>
        </authorList>
    </citation>
    <scope>NUCLEOTIDE SEQUENCE [LARGE SCALE GENOMIC DNA]</scope>
    <source>
        <strain>C4 / ATCC 48331 / race T</strain>
    </source>
</reference>
<reference key="4">
    <citation type="journal article" date="1996" name="Plant Cell">
        <title>A polyketide synthase is required for fungal virulence and production of the polyketide T-toxin.</title>
        <authorList>
            <person name="Yang G."/>
            <person name="Rose M.S."/>
            <person name="Turgeon B.G."/>
            <person name="Yoder O.C."/>
        </authorList>
    </citation>
    <scope>FUNCTION</scope>
    <source>
        <strain>C4 / ATCC 48331 / race T</strain>
    </source>
</reference>
<reference key="5">
    <citation type="journal article" date="2002" name="Mol. Plant Microbe Interact.">
        <title>A decarboxylase encoded at the Cochliobolus heterostrophus translocation-associated Tox1B locus is required for polyketide (T-toxin) biosynthesis and high virulence on T-cytoplasm maize.</title>
        <authorList>
            <person name="Rose M.S."/>
            <person name="Yun S.-H."/>
            <person name="Asvarak T."/>
            <person name="Lu S.-W."/>
            <person name="Yoder O.C."/>
            <person name="Turgeon B.G."/>
        </authorList>
    </citation>
    <scope>FUNCTION</scope>
    <source>
        <strain>C4 / ATCC 48331 / race T</strain>
    </source>
</reference>
<reference key="6">
    <citation type="journal article" date="2010" name="Mol. Plant Microbe Interact.">
        <title>Six new genes required for production of T-toxin, a polyketide determinant of high virulence of Cochliobolus heterostrophus to maize.</title>
        <authorList>
            <person name="Inderbitzin P."/>
            <person name="Asvarak T."/>
            <person name="Turgeon B.G."/>
        </authorList>
    </citation>
    <scope>FUNCTION</scope>
    <source>
        <strain>C4 / ATCC 48331 / race T</strain>
    </source>
</reference>
<sequence>MTSRQNTNTPMPLAIIGMSCRFPGKVASLEDFWDMLSNSKHGYRQFPRERFNWEAFYHPNQSRKDCIDVNCGYFLDGDIAEFDAQFFKMNGTDAASFDPQGRMILECVYEALENAGVPKESIVGSKVGVFSTSNTSDYTLSLKDDIYSMPALVGVLGHACMLSNIVSNTFDLKGPSVSIDTACSSAFYALQLASQSLRSGETEMCIVSGCALNISPWRWTMLSNLTMLNPDGLSKSFDPQADAGYVRGEGAASIIVKPLDAAIRDNDRVHCVLSDIGVNHNGRTNGYTLPDARMQASLMRELQVRLDIKPDEFGFVEAHAPGTRVGDPIEISALQEVFSTSARTLEDPLLIGSVKANVGHLESSSGFPSLIKAAMMLKKGLVVPNANFENESMNSHLKEKNMRVPISTQPWPKGKTYIAINNYGFGGSNSHCIVRAPPIPQGLVSQKETRNVESDYLFVLSANDEVALRRTREQLVEFLESVDASSTTMQNTAYTLGQRRSLLSWRATVVASNIDDLIIQAASPQVIPRRVTRQPTLVFAFTGQGAQYFGVGRELLQYPVFSTTLKMASACAESFGANFSLQDELYGNEATSRINDADVSQPASTAIQIALVDLLRSWGIQPSAVVGHSSGEVAAAYAAGLLSLPGAMRIAYARGQMAIRIKKVQPDFKGGMLAVAAGPADVLPLLDIVTSGKVVIACENSPKSVTVSGDEAGLVELESLLEEDGLPHRRLAVDFPYHSTFLDPFIDDYEEAICTDDTFSNLQPTAEYFSAMAGRKVEPVTVQKPSYWASSAKFRVRFTSAAKALLRSKPSPNVVVEIGPNPTLVGSLKSILSEIKKEIPHPIEVVPSLHRGQNARTAMLKLGASLVSFGQRIDMEQVNFASGHISGQPPTLVDGIKPYPWTRSHHWIKSRVRDDDLHRPFPHHDLLGSINSSWGSKELVWKNNLDVENVPWLRDYQVASSITYPLAGYVCAAIEASKQFAMTRNLFLDRAFKGFTVRDMIIDESLVMKEGIPVELVTKLRSLPGTNFEEFEVLSWDEGQRAWKRCCRALVKCEATTDGVEQVEEMKWAESRAACHSCVGSPLLYQRLSKVGPRRTGKFRNVVDLRYGAGKTTAEVVVSDTKASMPQHYESDMTVHPTTIDGLFQCGSCIPFLDESSSVVGGSSNIWVPRSIKEFTIQTRPGEALKPEMVFRTVARVDKNERHDRSYSIDGTTDNAPICQIRIRGLKLAVEATLAPQWPAPHYGCYKIAWQNATELRSQAAQWHVLQGPGDVKNLAGSVSKKIGGTVRPLCEGVPSEASFCVVVDVGEGLLASVERESFNHIKQALTTCEGVLWVTCGAFGVSYDSTHPNAGMVTGLLRTIRSEMRASVASLDLDANASSDIEAQAALVKRVADHLAAAAQNADVQAEMEFTEKQGQLMVSRVVHDTQLDNVVHAVTGVIAPRTEPFDPEVRGFFTLQRPGMPDSLYLQRTDVPDPLDESEVEVRIAAIALDADDIHGLQGRALSGTVVRCGSTVTRVQPGDRVFGLANIDGAVRTFARAPETCLARTPANIPIDAAAALPATLGAAYHALVDLGRLVAGESVLIVAVGSALGQAAIQVALAKGALVFALAHSQEERDAAIVAGASIDRVVTTLVGLPPIQILFNPVSDANANLSMLGALAPLGRIVQVGEPSHQYPALAVGHSFSIAHLDAVADALPAQMAAILDAVVGLVDSKFVHSPPVRTVGLEYLSEALSNISETDSKKLLLVPGKNEMVKATPSCPAPPTFDPAAVYLLVGGSGGLGRVIAKWMLNNGARKIGLLSRSTSMSPDVRTLVDDAAGIGAEVFLLPCDVTSQHHLQRVIDQCVIEKGQIKGVINAAMVFKGGVFTSVSFDDFTSVVQPKVCGTWNLHHALREATLDFFILISSVAGIMGTPGHSAYASANTFLDSFAMYRMQQGLPATSLALTAVVDAGYMAENASKLQKLKYVSEFEGEILLTADVLALLGAAVTGSIASSCKGFSIIGAGFGTALKLPSYAQDPRFSTLTSNHSQDRKSKPRTTTAANTDTLVYAVDQADTKEEATQLLLAAIRDKIAQLQLIPVSDIVDDQTITELGLDSLTVMELYSWVGRLFRLRFGIQEYARLDTLEKIVDSVIVKREAAKVEAP</sequence>
<organism>
    <name type="scientific">Cochliobolus heterostrophus (strain C4 / ATCC 48331 / race T)</name>
    <name type="common">Southern corn leaf blight fungus</name>
    <name type="synonym">Bipolaris maydis</name>
    <dbReference type="NCBI Taxonomy" id="665024"/>
    <lineage>
        <taxon>Eukaryota</taxon>
        <taxon>Fungi</taxon>
        <taxon>Dikarya</taxon>
        <taxon>Ascomycota</taxon>
        <taxon>Pezizomycotina</taxon>
        <taxon>Dothideomycetes</taxon>
        <taxon>Pleosporomycetidae</taxon>
        <taxon>Pleosporales</taxon>
        <taxon>Pleosporineae</taxon>
        <taxon>Pleosporaceae</taxon>
        <taxon>Bipolaris</taxon>
    </lineage>
</organism>
<gene>
    <name evidence="9" type="primary">PKS2</name>
    <name type="ORF">COCC4DRAFT_45941</name>
</gene>
<dbReference type="EC" id="2.3.1.-" evidence="11"/>
<dbReference type="EMBL" id="DQ186598">
    <property type="protein sequence ID" value="ABB76806.1"/>
    <property type="molecule type" value="Genomic_DNA"/>
</dbReference>
<dbReference type="EMBL" id="KB733526">
    <property type="protein sequence ID" value="ENH98579.1"/>
    <property type="molecule type" value="Genomic_DNA"/>
</dbReference>
<dbReference type="RefSeq" id="XP_014072489.1">
    <property type="nucleotide sequence ID" value="XM_014217014.1"/>
</dbReference>
<dbReference type="SMR" id="N4WHA7"/>
<dbReference type="GeneID" id="25845246"/>
<dbReference type="HOGENOM" id="CLU_000022_31_0_1"/>
<dbReference type="OrthoDB" id="329835at2759"/>
<dbReference type="Proteomes" id="UP000012338">
    <property type="component" value="Unassembled WGS sequence"/>
</dbReference>
<dbReference type="GO" id="GO:0004315">
    <property type="term" value="F:3-oxoacyl-[acyl-carrier-protein] synthase activity"/>
    <property type="evidence" value="ECO:0007669"/>
    <property type="project" value="InterPro"/>
</dbReference>
<dbReference type="GO" id="GO:0004312">
    <property type="term" value="F:fatty acid synthase activity"/>
    <property type="evidence" value="ECO:0007669"/>
    <property type="project" value="TreeGrafter"/>
</dbReference>
<dbReference type="GO" id="GO:0016491">
    <property type="term" value="F:oxidoreductase activity"/>
    <property type="evidence" value="ECO:0007669"/>
    <property type="project" value="UniProtKB-KW"/>
</dbReference>
<dbReference type="GO" id="GO:0031177">
    <property type="term" value="F:phosphopantetheine binding"/>
    <property type="evidence" value="ECO:0007669"/>
    <property type="project" value="InterPro"/>
</dbReference>
<dbReference type="GO" id="GO:0006633">
    <property type="term" value="P:fatty acid biosynthetic process"/>
    <property type="evidence" value="ECO:0007669"/>
    <property type="project" value="InterPro"/>
</dbReference>
<dbReference type="GO" id="GO:0044550">
    <property type="term" value="P:secondary metabolite biosynthetic process"/>
    <property type="evidence" value="ECO:0007669"/>
    <property type="project" value="TreeGrafter"/>
</dbReference>
<dbReference type="CDD" id="cd05195">
    <property type="entry name" value="enoyl_red"/>
    <property type="match status" value="1"/>
</dbReference>
<dbReference type="CDD" id="cd00833">
    <property type="entry name" value="PKS"/>
    <property type="match status" value="1"/>
</dbReference>
<dbReference type="Gene3D" id="3.30.70.3290">
    <property type="match status" value="1"/>
</dbReference>
<dbReference type="Gene3D" id="3.40.47.10">
    <property type="match status" value="1"/>
</dbReference>
<dbReference type="Gene3D" id="1.10.1200.10">
    <property type="entry name" value="ACP-like"/>
    <property type="match status" value="1"/>
</dbReference>
<dbReference type="Gene3D" id="3.40.366.10">
    <property type="entry name" value="Malonyl-Coenzyme A Acyl Carrier Protein, domain 2"/>
    <property type="match status" value="1"/>
</dbReference>
<dbReference type="Gene3D" id="3.90.180.10">
    <property type="entry name" value="Medium-chain alcohol dehydrogenases, catalytic domain"/>
    <property type="match status" value="1"/>
</dbReference>
<dbReference type="Gene3D" id="3.40.50.720">
    <property type="entry name" value="NAD(P)-binding Rossmann-like Domain"/>
    <property type="match status" value="2"/>
</dbReference>
<dbReference type="Gene3D" id="3.10.129.110">
    <property type="entry name" value="Polyketide synthase dehydratase"/>
    <property type="match status" value="1"/>
</dbReference>
<dbReference type="InterPro" id="IPR001227">
    <property type="entry name" value="Ac_transferase_dom_sf"/>
</dbReference>
<dbReference type="InterPro" id="IPR036736">
    <property type="entry name" value="ACP-like_sf"/>
</dbReference>
<dbReference type="InterPro" id="IPR014043">
    <property type="entry name" value="Acyl_transferase_dom"/>
</dbReference>
<dbReference type="InterPro" id="IPR016035">
    <property type="entry name" value="Acyl_Trfase/lysoPLipase"/>
</dbReference>
<dbReference type="InterPro" id="IPR011032">
    <property type="entry name" value="GroES-like_sf"/>
</dbReference>
<dbReference type="InterPro" id="IPR018201">
    <property type="entry name" value="Ketoacyl_synth_AS"/>
</dbReference>
<dbReference type="InterPro" id="IPR014031">
    <property type="entry name" value="Ketoacyl_synth_C"/>
</dbReference>
<dbReference type="InterPro" id="IPR014030">
    <property type="entry name" value="Ketoacyl_synth_N"/>
</dbReference>
<dbReference type="InterPro" id="IPR016036">
    <property type="entry name" value="Malonyl_transacylase_ACP-bd"/>
</dbReference>
<dbReference type="InterPro" id="IPR036291">
    <property type="entry name" value="NAD(P)-bd_dom_sf"/>
</dbReference>
<dbReference type="InterPro" id="IPR056501">
    <property type="entry name" value="NAD-bd_HRPKS_sdrA"/>
</dbReference>
<dbReference type="InterPro" id="IPR032821">
    <property type="entry name" value="PKS_assoc"/>
</dbReference>
<dbReference type="InterPro" id="IPR020841">
    <property type="entry name" value="PKS_Beta-ketoAc_synthase_dom"/>
</dbReference>
<dbReference type="InterPro" id="IPR042104">
    <property type="entry name" value="PKS_dehydratase_sf"/>
</dbReference>
<dbReference type="InterPro" id="IPR020807">
    <property type="entry name" value="PKS_DH"/>
</dbReference>
<dbReference type="InterPro" id="IPR049551">
    <property type="entry name" value="PKS_DH_C"/>
</dbReference>
<dbReference type="InterPro" id="IPR049552">
    <property type="entry name" value="PKS_DH_N"/>
</dbReference>
<dbReference type="InterPro" id="IPR020843">
    <property type="entry name" value="PKS_ER"/>
</dbReference>
<dbReference type="InterPro" id="IPR013968">
    <property type="entry name" value="PKS_KR"/>
</dbReference>
<dbReference type="InterPro" id="IPR049900">
    <property type="entry name" value="PKS_mFAS_DH"/>
</dbReference>
<dbReference type="InterPro" id="IPR050091">
    <property type="entry name" value="PKS_NRPS_Biosynth_Enz"/>
</dbReference>
<dbReference type="InterPro" id="IPR020806">
    <property type="entry name" value="PKS_PP-bd"/>
</dbReference>
<dbReference type="InterPro" id="IPR009081">
    <property type="entry name" value="PP-bd_ACP"/>
</dbReference>
<dbReference type="InterPro" id="IPR016039">
    <property type="entry name" value="Thiolase-like"/>
</dbReference>
<dbReference type="PANTHER" id="PTHR43775">
    <property type="entry name" value="FATTY ACID SYNTHASE"/>
    <property type="match status" value="1"/>
</dbReference>
<dbReference type="PANTHER" id="PTHR43775:SF13">
    <property type="entry name" value="POLYKETIDE SYNTHASE 1"/>
    <property type="match status" value="1"/>
</dbReference>
<dbReference type="Pfam" id="PF00698">
    <property type="entry name" value="Acyl_transf_1"/>
    <property type="match status" value="1"/>
</dbReference>
<dbReference type="Pfam" id="PF16197">
    <property type="entry name" value="KAsynt_C_assoc"/>
    <property type="match status" value="1"/>
</dbReference>
<dbReference type="Pfam" id="PF00109">
    <property type="entry name" value="ketoacyl-synt"/>
    <property type="match status" value="1"/>
</dbReference>
<dbReference type="Pfam" id="PF02801">
    <property type="entry name" value="Ketoacyl-synt_C"/>
    <property type="match status" value="1"/>
</dbReference>
<dbReference type="Pfam" id="PF08659">
    <property type="entry name" value="KR"/>
    <property type="match status" value="1"/>
</dbReference>
<dbReference type="Pfam" id="PF23114">
    <property type="entry name" value="NAD-bd_HRPKS_sdrA"/>
    <property type="match status" value="1"/>
</dbReference>
<dbReference type="Pfam" id="PF21089">
    <property type="entry name" value="PKS_DH_N"/>
    <property type="match status" value="1"/>
</dbReference>
<dbReference type="Pfam" id="PF00550">
    <property type="entry name" value="PP-binding"/>
    <property type="match status" value="1"/>
</dbReference>
<dbReference type="Pfam" id="PF14765">
    <property type="entry name" value="PS-DH"/>
    <property type="match status" value="1"/>
</dbReference>
<dbReference type="SMART" id="SM00827">
    <property type="entry name" value="PKS_AT"/>
    <property type="match status" value="1"/>
</dbReference>
<dbReference type="SMART" id="SM00826">
    <property type="entry name" value="PKS_DH"/>
    <property type="match status" value="1"/>
</dbReference>
<dbReference type="SMART" id="SM00829">
    <property type="entry name" value="PKS_ER"/>
    <property type="match status" value="1"/>
</dbReference>
<dbReference type="SMART" id="SM00822">
    <property type="entry name" value="PKS_KR"/>
    <property type="match status" value="1"/>
</dbReference>
<dbReference type="SMART" id="SM00825">
    <property type="entry name" value="PKS_KS"/>
    <property type="match status" value="1"/>
</dbReference>
<dbReference type="SMART" id="SM00823">
    <property type="entry name" value="PKS_PP"/>
    <property type="match status" value="1"/>
</dbReference>
<dbReference type="SUPFAM" id="SSF47336">
    <property type="entry name" value="ACP-like"/>
    <property type="match status" value="1"/>
</dbReference>
<dbReference type="SUPFAM" id="SSF52151">
    <property type="entry name" value="FabD/lysophospholipase-like"/>
    <property type="match status" value="1"/>
</dbReference>
<dbReference type="SUPFAM" id="SSF50129">
    <property type="entry name" value="GroES-like"/>
    <property type="match status" value="1"/>
</dbReference>
<dbReference type="SUPFAM" id="SSF51735">
    <property type="entry name" value="NAD(P)-binding Rossmann-fold domains"/>
    <property type="match status" value="2"/>
</dbReference>
<dbReference type="SUPFAM" id="SSF55048">
    <property type="entry name" value="Probable ACP-binding domain of malonyl-CoA ACP transacylase"/>
    <property type="match status" value="1"/>
</dbReference>
<dbReference type="SUPFAM" id="SSF53901">
    <property type="entry name" value="Thiolase-like"/>
    <property type="match status" value="1"/>
</dbReference>
<dbReference type="PROSITE" id="PS50075">
    <property type="entry name" value="CARRIER"/>
    <property type="match status" value="1"/>
</dbReference>
<dbReference type="PROSITE" id="PS00606">
    <property type="entry name" value="KS3_1"/>
    <property type="match status" value="1"/>
</dbReference>
<dbReference type="PROSITE" id="PS52004">
    <property type="entry name" value="KS3_2"/>
    <property type="match status" value="1"/>
</dbReference>
<dbReference type="PROSITE" id="PS52019">
    <property type="entry name" value="PKS_MFAS_DH"/>
    <property type="match status" value="1"/>
</dbReference>
<protein>
    <recommendedName>
        <fullName evidence="9">Reducing polyketide synthase PKS2</fullName>
        <ecNumber evidence="11">2.3.1.-</ecNumber>
    </recommendedName>
    <alternativeName>
        <fullName evidence="10">T-toxin biosynthesis protein PKS2</fullName>
    </alternativeName>
</protein>
<evidence type="ECO:0000255" key="1"/>
<evidence type="ECO:0000255" key="2">
    <source>
        <dbReference type="PROSITE-ProRule" id="PRU00258"/>
    </source>
</evidence>
<evidence type="ECO:0000255" key="3">
    <source>
        <dbReference type="PROSITE-ProRule" id="PRU01348"/>
    </source>
</evidence>
<evidence type="ECO:0000255" key="4">
    <source>
        <dbReference type="PROSITE-ProRule" id="PRU01363"/>
    </source>
</evidence>
<evidence type="ECO:0000269" key="5">
    <source>
    </source>
</evidence>
<evidence type="ECO:0000269" key="6">
    <source>
    </source>
</evidence>
<evidence type="ECO:0000269" key="7">
    <source>
    </source>
</evidence>
<evidence type="ECO:0000269" key="8">
    <source>
    </source>
</evidence>
<evidence type="ECO:0000303" key="9">
    <source>
    </source>
</evidence>
<evidence type="ECO:0000305" key="10"/>
<evidence type="ECO:0000305" key="11">
    <source>
    </source>
</evidence>
<comment type="function">
    <text evidence="5 6 7 8">Reducing polyketide synthase (PKS); part of the Tox1A locus, one of the 2 loci that mediate the biosynthesis of T-toxin, a family of linear polyketides 37 to 45 carbons in length, of which the major component is 41 carbons, and which leads to high virulence to maize (PubMed:20192833, PubMed:8953776). One of the PKSs (PKS1 or PKS2) could synthesize a precursor, used subsequently by the other PKS as starter unit, to add additional carbons (PubMed:16529376). Variability in the length of the final carbon backbone C35-47 could be achieved by varying the number of condensation cycles, or use of different starter or extender units or might be due to decarboxylation of the penultimate product, catalyzed by DEC1 (PubMed:12236595). Additional proteins are required for the biosynthesis of T-toxin, including oxidoreductases RED1, RED2, RED3, LAM1 and OXI1, as well as esterase TOX9 (PubMed:20192833).</text>
</comment>
<comment type="pathway">
    <text evidence="6">Mycotoxin biosynthesis.</text>
</comment>
<comment type="disruption phenotype">
    <text evidence="6">Leads to the loss of T-Toxin production, resulting in low virulence for maize (PubMed:16529376).</text>
</comment>
<name>PKS2_COCH4</name>
<keyword id="KW-0012">Acyltransferase</keyword>
<keyword id="KW-0511">Multifunctional enzyme</keyword>
<keyword id="KW-0521">NADP</keyword>
<keyword id="KW-0560">Oxidoreductase</keyword>
<keyword id="KW-0596">Phosphopantetheine</keyword>
<keyword id="KW-0597">Phosphoprotein</keyword>
<keyword id="KW-0808">Transferase</keyword>